<proteinExistence type="inferred from homology"/>
<reference key="1">
    <citation type="journal article" date="2004" name="Science">
        <title>The 1.2-megabase genome sequence of Mimivirus.</title>
        <authorList>
            <person name="Raoult D."/>
            <person name="Audic S."/>
            <person name="Robert C."/>
            <person name="Abergel C."/>
            <person name="Renesto P."/>
            <person name="Ogata H."/>
            <person name="La Scola B."/>
            <person name="Susan M."/>
            <person name="Claverie J.-M."/>
        </authorList>
    </citation>
    <scope>NUCLEOTIDE SEQUENCE [LARGE SCALE GENOMIC DNA]</scope>
    <source>
        <strain>Rowbotham-Bradford</strain>
    </source>
</reference>
<dbReference type="EMBL" id="AY653733">
    <property type="protein sequence ID" value="AAV50451.1"/>
    <property type="molecule type" value="Genomic_DNA"/>
</dbReference>
<dbReference type="KEGG" id="vg:9924779"/>
<dbReference type="Proteomes" id="UP000001134">
    <property type="component" value="Genome"/>
</dbReference>
<name>YL177_MIMIV</name>
<comment type="similarity">
    <text evidence="1">Belongs to the mimivirus L17x/L18x family.</text>
</comment>
<evidence type="ECO:0000305" key="1"/>
<protein>
    <recommendedName>
        <fullName>Uncharacterized protein L177</fullName>
    </recommendedName>
</protein>
<keyword id="KW-1185">Reference proteome</keyword>
<feature type="chain" id="PRO_0000071233" description="Uncharacterized protein L177">
    <location>
        <begin position="1"/>
        <end position="379"/>
    </location>
</feature>
<sequence>MGEFVFCYGSQNKKCLSKYIKQTKNSYKLYLSDNNYIYFDKIKTQDCQKYIEVDFNNSFEFLKFIVKKKIYCDMHNRNCKSFCFHNNYFKYIVENKHYDIIKFFCKKFIPLIKSNRNIYSFPYSLPMYVDLDDFNYIFKHSCLEDIYPSIIQVLRYNRDITIEFMDDIFSIYKNKLTKLFINDNILDLDSKFEIGPQIFLTPSFVKDDVNLFDFIIEEICNLTSEIDKTKLDKKQLKLLENFKVKFDSEFICEIIYSRMLHDFEDILQVEDTYFCPKIFKQMLPNISDLINSLTHNRIIQFIIAYNIVEYMGILCDFIGDTEPKFINNMLIKATSTEMGQLLIDYGADYEKLYRSTSFKNCSDCVKKLVKKIIKETSDS</sequence>
<organism>
    <name type="scientific">Acanthamoeba polyphaga mimivirus</name>
    <name type="common">APMV</name>
    <dbReference type="NCBI Taxonomy" id="212035"/>
    <lineage>
        <taxon>Viruses</taxon>
        <taxon>Varidnaviria</taxon>
        <taxon>Bamfordvirae</taxon>
        <taxon>Nucleocytoviricota</taxon>
        <taxon>Megaviricetes</taxon>
        <taxon>Imitervirales</taxon>
        <taxon>Mimiviridae</taxon>
        <taxon>Megamimivirinae</taxon>
        <taxon>Mimivirus</taxon>
        <taxon>Mimivirus bradfordmassiliense</taxon>
    </lineage>
</organism>
<organismHost>
    <name type="scientific">Acanthamoeba polyphaga</name>
    <name type="common">Amoeba</name>
    <dbReference type="NCBI Taxonomy" id="5757"/>
</organismHost>
<gene>
    <name type="ordered locus">MIMI_L177</name>
</gene>
<accession>Q5UPN8</accession>